<feature type="chain" id="PRO_1000000359" description="Adenine phosphoribosyltransferase">
    <location>
        <begin position="1"/>
        <end position="170"/>
    </location>
</feature>
<accession>A3CNR3</accession>
<gene>
    <name evidence="1" type="primary">apt</name>
    <name type="ordered locus">SSA_1421</name>
</gene>
<dbReference type="EC" id="2.4.2.7" evidence="1"/>
<dbReference type="EMBL" id="CP000387">
    <property type="protein sequence ID" value="ABN44818.1"/>
    <property type="molecule type" value="Genomic_DNA"/>
</dbReference>
<dbReference type="RefSeq" id="WP_002897341.1">
    <property type="nucleotide sequence ID" value="NZ_CAXTYR010000001.1"/>
</dbReference>
<dbReference type="RefSeq" id="YP_001035368.1">
    <property type="nucleotide sequence ID" value="NC_009009.1"/>
</dbReference>
<dbReference type="SMR" id="A3CNR3"/>
<dbReference type="STRING" id="388919.SSA_1421"/>
<dbReference type="KEGG" id="ssa:SSA_1421"/>
<dbReference type="PATRIC" id="fig|388919.9.peg.1348"/>
<dbReference type="eggNOG" id="COG0503">
    <property type="taxonomic scope" value="Bacteria"/>
</dbReference>
<dbReference type="HOGENOM" id="CLU_063339_3_0_9"/>
<dbReference type="OrthoDB" id="9803963at2"/>
<dbReference type="UniPathway" id="UPA00588">
    <property type="reaction ID" value="UER00646"/>
</dbReference>
<dbReference type="Proteomes" id="UP000002148">
    <property type="component" value="Chromosome"/>
</dbReference>
<dbReference type="GO" id="GO:0005737">
    <property type="term" value="C:cytoplasm"/>
    <property type="evidence" value="ECO:0007669"/>
    <property type="project" value="UniProtKB-SubCell"/>
</dbReference>
<dbReference type="GO" id="GO:0002055">
    <property type="term" value="F:adenine binding"/>
    <property type="evidence" value="ECO:0007669"/>
    <property type="project" value="TreeGrafter"/>
</dbReference>
<dbReference type="GO" id="GO:0003999">
    <property type="term" value="F:adenine phosphoribosyltransferase activity"/>
    <property type="evidence" value="ECO:0007669"/>
    <property type="project" value="UniProtKB-UniRule"/>
</dbReference>
<dbReference type="GO" id="GO:0016208">
    <property type="term" value="F:AMP binding"/>
    <property type="evidence" value="ECO:0007669"/>
    <property type="project" value="TreeGrafter"/>
</dbReference>
<dbReference type="GO" id="GO:0006168">
    <property type="term" value="P:adenine salvage"/>
    <property type="evidence" value="ECO:0007669"/>
    <property type="project" value="InterPro"/>
</dbReference>
<dbReference type="GO" id="GO:0044209">
    <property type="term" value="P:AMP salvage"/>
    <property type="evidence" value="ECO:0007669"/>
    <property type="project" value="UniProtKB-UniRule"/>
</dbReference>
<dbReference type="GO" id="GO:0006166">
    <property type="term" value="P:purine ribonucleoside salvage"/>
    <property type="evidence" value="ECO:0007669"/>
    <property type="project" value="UniProtKB-KW"/>
</dbReference>
<dbReference type="CDD" id="cd06223">
    <property type="entry name" value="PRTases_typeI"/>
    <property type="match status" value="1"/>
</dbReference>
<dbReference type="FunFam" id="3.40.50.2020:FF:000004">
    <property type="entry name" value="Adenine phosphoribosyltransferase"/>
    <property type="match status" value="1"/>
</dbReference>
<dbReference type="Gene3D" id="3.40.50.2020">
    <property type="match status" value="1"/>
</dbReference>
<dbReference type="HAMAP" id="MF_00004">
    <property type="entry name" value="Aden_phosphoribosyltr"/>
    <property type="match status" value="1"/>
</dbReference>
<dbReference type="InterPro" id="IPR005764">
    <property type="entry name" value="Ade_phspho_trans"/>
</dbReference>
<dbReference type="InterPro" id="IPR000836">
    <property type="entry name" value="PRibTrfase_dom"/>
</dbReference>
<dbReference type="InterPro" id="IPR029057">
    <property type="entry name" value="PRTase-like"/>
</dbReference>
<dbReference type="InterPro" id="IPR050054">
    <property type="entry name" value="UPRTase/APRTase"/>
</dbReference>
<dbReference type="NCBIfam" id="TIGR01090">
    <property type="entry name" value="apt"/>
    <property type="match status" value="1"/>
</dbReference>
<dbReference type="NCBIfam" id="NF002633">
    <property type="entry name" value="PRK02304.1-2"/>
    <property type="match status" value="1"/>
</dbReference>
<dbReference type="NCBIfam" id="NF002634">
    <property type="entry name" value="PRK02304.1-3"/>
    <property type="match status" value="1"/>
</dbReference>
<dbReference type="NCBIfam" id="NF002636">
    <property type="entry name" value="PRK02304.1-5"/>
    <property type="match status" value="1"/>
</dbReference>
<dbReference type="PANTHER" id="PTHR32315">
    <property type="entry name" value="ADENINE PHOSPHORIBOSYLTRANSFERASE"/>
    <property type="match status" value="1"/>
</dbReference>
<dbReference type="PANTHER" id="PTHR32315:SF3">
    <property type="entry name" value="ADENINE PHOSPHORIBOSYLTRANSFERASE"/>
    <property type="match status" value="1"/>
</dbReference>
<dbReference type="Pfam" id="PF00156">
    <property type="entry name" value="Pribosyltran"/>
    <property type="match status" value="1"/>
</dbReference>
<dbReference type="SUPFAM" id="SSF53271">
    <property type="entry name" value="PRTase-like"/>
    <property type="match status" value="1"/>
</dbReference>
<dbReference type="PROSITE" id="PS00103">
    <property type="entry name" value="PUR_PYR_PR_TRANSFER"/>
    <property type="match status" value="1"/>
</dbReference>
<proteinExistence type="inferred from homology"/>
<protein>
    <recommendedName>
        <fullName evidence="1">Adenine phosphoribosyltransferase</fullName>
        <shortName evidence="1">APRT</shortName>
        <ecNumber evidence="1">2.4.2.7</ecNumber>
    </recommendedName>
</protein>
<evidence type="ECO:0000255" key="1">
    <source>
        <dbReference type="HAMAP-Rule" id="MF_00004"/>
    </source>
</evidence>
<organism>
    <name type="scientific">Streptococcus sanguinis (strain SK36)</name>
    <dbReference type="NCBI Taxonomy" id="388919"/>
    <lineage>
        <taxon>Bacteria</taxon>
        <taxon>Bacillati</taxon>
        <taxon>Bacillota</taxon>
        <taxon>Bacilli</taxon>
        <taxon>Lactobacillales</taxon>
        <taxon>Streptococcaceae</taxon>
        <taxon>Streptococcus</taxon>
    </lineage>
</organism>
<keyword id="KW-0963">Cytoplasm</keyword>
<keyword id="KW-0328">Glycosyltransferase</keyword>
<keyword id="KW-0660">Purine salvage</keyword>
<keyword id="KW-1185">Reference proteome</keyword>
<keyword id="KW-0808">Transferase</keyword>
<sequence length="170" mass="18724">MNLKDYIATIENYPKEGVTFRDISPLMADGNAYSYAVREIVQYATDKKIDMIVGPEARGFIVGCPVAFELGIGFAPVRKPGKLPREVISADYEKEYGVDTLTMHADAIKPGQRVLIVDDLLATGGTVKATIEMIERLGGVVAGCAFLIELDELKGREVIGDYDYKVLMHY</sequence>
<comment type="function">
    <text evidence="1">Catalyzes a salvage reaction resulting in the formation of AMP, that is energically less costly than de novo synthesis.</text>
</comment>
<comment type="catalytic activity">
    <reaction evidence="1">
        <text>AMP + diphosphate = 5-phospho-alpha-D-ribose 1-diphosphate + adenine</text>
        <dbReference type="Rhea" id="RHEA:16609"/>
        <dbReference type="ChEBI" id="CHEBI:16708"/>
        <dbReference type="ChEBI" id="CHEBI:33019"/>
        <dbReference type="ChEBI" id="CHEBI:58017"/>
        <dbReference type="ChEBI" id="CHEBI:456215"/>
        <dbReference type="EC" id="2.4.2.7"/>
    </reaction>
</comment>
<comment type="pathway">
    <text evidence="1">Purine metabolism; AMP biosynthesis via salvage pathway; AMP from adenine: step 1/1.</text>
</comment>
<comment type="subunit">
    <text evidence="1">Homodimer.</text>
</comment>
<comment type="subcellular location">
    <subcellularLocation>
        <location evidence="1">Cytoplasm</location>
    </subcellularLocation>
</comment>
<comment type="similarity">
    <text evidence="1">Belongs to the purine/pyrimidine phosphoribosyltransferase family.</text>
</comment>
<reference key="1">
    <citation type="journal article" date="2007" name="J. Bacteriol.">
        <title>Genome of the opportunistic pathogen Streptococcus sanguinis.</title>
        <authorList>
            <person name="Xu P."/>
            <person name="Alves J.M."/>
            <person name="Kitten T."/>
            <person name="Brown A."/>
            <person name="Chen Z."/>
            <person name="Ozaki L.S."/>
            <person name="Manque P."/>
            <person name="Ge X."/>
            <person name="Serrano M.G."/>
            <person name="Puiu D."/>
            <person name="Hendricks S."/>
            <person name="Wang Y."/>
            <person name="Chaplin M.D."/>
            <person name="Akan D."/>
            <person name="Paik S."/>
            <person name="Peterson D.L."/>
            <person name="Macrina F.L."/>
            <person name="Buck G.A."/>
        </authorList>
    </citation>
    <scope>NUCLEOTIDE SEQUENCE [LARGE SCALE GENOMIC DNA]</scope>
    <source>
        <strain>SK36</strain>
    </source>
</reference>
<name>APT_STRSV</name>